<organism>
    <name type="scientific">Methanothermobacter thermautotrophicus (strain ATCC 29096 / DSM 1053 / JCM 10044 / NBRC 100330 / Delta H)</name>
    <name type="common">Methanobacterium thermoautotrophicum</name>
    <dbReference type="NCBI Taxonomy" id="187420"/>
    <lineage>
        <taxon>Archaea</taxon>
        <taxon>Methanobacteriati</taxon>
        <taxon>Methanobacteriota</taxon>
        <taxon>Methanomada group</taxon>
        <taxon>Methanobacteria</taxon>
        <taxon>Methanobacteriales</taxon>
        <taxon>Methanobacteriaceae</taxon>
        <taxon>Methanothermobacter</taxon>
    </lineage>
</organism>
<evidence type="ECO:0000256" key="1">
    <source>
        <dbReference type="SAM" id="MobiDB-lite"/>
    </source>
</evidence>
<evidence type="ECO:0000305" key="2"/>
<keyword id="KW-1185">Reference proteome</keyword>
<dbReference type="EMBL" id="AE000666">
    <property type="protein sequence ID" value="AAB85626.1"/>
    <property type="molecule type" value="Genomic_DNA"/>
</dbReference>
<dbReference type="EMBL" id="J04540">
    <property type="protein sequence ID" value="AAB02348.1"/>
    <property type="molecule type" value="Genomic_DNA"/>
</dbReference>
<dbReference type="PIR" id="D69018">
    <property type="entry name" value="D69018"/>
</dbReference>
<dbReference type="RefSeq" id="WP_010876761.1">
    <property type="nucleotide sequence ID" value="NC_000916.1"/>
</dbReference>
<dbReference type="FunCoup" id="O27209">
    <property type="interactions" value="2"/>
</dbReference>
<dbReference type="STRING" id="187420.MTH_1137"/>
<dbReference type="PaxDb" id="187420-MTH_1137"/>
<dbReference type="EnsemblBacteria" id="AAB85626">
    <property type="protein sequence ID" value="AAB85626"/>
    <property type="gene ID" value="MTH_1137"/>
</dbReference>
<dbReference type="GeneID" id="1471545"/>
<dbReference type="KEGG" id="mth:MTH_1137"/>
<dbReference type="PATRIC" id="fig|187420.15.peg.1114"/>
<dbReference type="HOGENOM" id="CLU_539284_0_0_2"/>
<dbReference type="InParanoid" id="O27209"/>
<dbReference type="Proteomes" id="UP000005223">
    <property type="component" value="Chromosome"/>
</dbReference>
<dbReference type="InterPro" id="IPR016760">
    <property type="entry name" value="HcgG-like"/>
</dbReference>
<dbReference type="NCBIfam" id="TIGR03958">
    <property type="entry name" value="monoFe_hyd_HmdC"/>
    <property type="match status" value="1"/>
</dbReference>
<dbReference type="Pfam" id="PF10113">
    <property type="entry name" value="Fibrillarin_2"/>
    <property type="match status" value="1"/>
</dbReference>
<dbReference type="PIRSF" id="PIRSF019375">
    <property type="entry name" value="UCP019375"/>
    <property type="match status" value="1"/>
</dbReference>
<sequence>MHELIREAVDNPGTAWEIIKMDRDVTEVVDAVSDLSREDKIKLGATFKRFPLGCDLTELIVGTCASDLEKIDLMGNCMLSDTIGATIHVCAYAFADIAESYGMRPVELMREVRETTEVPLDLDHFGRYGPMRFPRSITGCGGQCYLEGPPFEGCPRERIHARLLDREKEGLSDREEWVELSSSVAVNLTPVQGAETHAAPLEEAEEVLELARKHGKGVEAIMFVGDGYDDLISGFEAGLEMGVDVFVLEGGPFNLAGDRLDAFAGAVAAARILTPGKIVATNGAYEDECRIGLRAGLNAIITGFPKNHHGYMCGYTPGTARRGKFGLPRVMKIMREEVESGLTPVPIQKAQLEALAAAVKVSGTENVYPRTLGYTYVGDAHWACLPSTPLYERVEVKRDVNALVKMAEDGDIHGRVAIFGARFVSWVIADKLDGLVDEFVIVDRDPWVEQVTVDNLRSELRTDVHPGNSDDEGAYSSADSSIVSTTIPQISAKISGKFRDTVTLV</sequence>
<feature type="chain" id="PRO_0000107038" description="Uncharacterized protein MTH_1137">
    <location>
        <begin position="1"/>
        <end position="505"/>
    </location>
</feature>
<feature type="region of interest" description="Disordered" evidence="1">
    <location>
        <begin position="461"/>
        <end position="480"/>
    </location>
</feature>
<feature type="sequence conflict" description="In Ref. 2; AAB02348." evidence="2" ref="2">
    <original>E</original>
    <variation>Q</variation>
    <location>
        <position position="472"/>
    </location>
</feature>
<reference key="1">
    <citation type="journal article" date="1997" name="J. Bacteriol.">
        <title>Complete genome sequence of Methanobacterium thermoautotrophicum deltaH: functional analysis and comparative genomics.</title>
        <authorList>
            <person name="Smith D.R."/>
            <person name="Doucette-Stamm L.A."/>
            <person name="Deloughery C."/>
            <person name="Lee H.-M."/>
            <person name="Dubois J."/>
            <person name="Aldredge T."/>
            <person name="Bashirzadeh R."/>
            <person name="Blakely D."/>
            <person name="Cook R."/>
            <person name="Gilbert K."/>
            <person name="Harrison D."/>
            <person name="Hoang L."/>
            <person name="Keagle P."/>
            <person name="Lumm W."/>
            <person name="Pothier B."/>
            <person name="Qiu D."/>
            <person name="Spadafora R."/>
            <person name="Vicare R."/>
            <person name="Wang Y."/>
            <person name="Wierzbowski J."/>
            <person name="Gibson R."/>
            <person name="Jiwani N."/>
            <person name="Caruso A."/>
            <person name="Bush D."/>
            <person name="Safer H."/>
            <person name="Patwell D."/>
            <person name="Prabhakar S."/>
            <person name="McDougall S."/>
            <person name="Shimer G."/>
            <person name="Goyal A."/>
            <person name="Pietrovski S."/>
            <person name="Church G.M."/>
            <person name="Daniels C.J."/>
            <person name="Mao J.-I."/>
            <person name="Rice P."/>
            <person name="Noelling J."/>
            <person name="Reeve J.N."/>
        </authorList>
    </citation>
    <scope>NUCLEOTIDE SEQUENCE [LARGE SCALE GENOMIC DNA]</scope>
    <source>
        <strain>ATCC 29096 / DSM 1053 / JCM 10044 / NBRC 100330 / Delta H</strain>
    </source>
</reference>
<reference key="2">
    <citation type="journal article" date="1989" name="Proc. Natl. Acad. Sci. U.S.A.">
        <title>A hydrogenase-linked gene in Methanobacterium thermoautotrophicum strain delta H encodes a polyferredoxin.</title>
        <authorList>
            <person name="Reeve J.N."/>
            <person name="Beckler G.S."/>
            <person name="Cram D.S."/>
            <person name="Hamilton P.T."/>
            <person name="Brown J.W."/>
            <person name="Krzycki J.A."/>
            <person name="Kolodziej A.F."/>
            <person name="Alex L."/>
            <person name="Orme-Johnson W.H."/>
            <person name="Walsh C.T."/>
        </authorList>
    </citation>
    <scope>NUCLEOTIDE SEQUENCE [GENOMIC DNA] OF 438-505</scope>
    <source>
        <strain>ATCC 29096 / DSM 1053 / JCM 10044 / NBRC 100330 / Delta H</strain>
    </source>
</reference>
<name>Y1137_METTH</name>
<protein>
    <recommendedName>
        <fullName>Uncharacterized protein MTH_1137</fullName>
    </recommendedName>
</protein>
<proteinExistence type="predicted"/>
<comment type="similarity">
    <text evidence="2">To M.jannaschii MJ0787.</text>
</comment>
<accession>O27209</accession>
<accession>Q50780</accession>
<gene>
    <name type="ordered locus">MTH_1137</name>
</gene>